<evidence type="ECO:0000250" key="1">
    <source>
        <dbReference type="UniProtKB" id="Q8RWN5"/>
    </source>
</evidence>
<evidence type="ECO:0000255" key="2">
    <source>
        <dbReference type="PROSITE-ProRule" id="PRU00176"/>
    </source>
</evidence>
<evidence type="ECO:0000269" key="3">
    <source>
    </source>
</evidence>
<evidence type="ECO:0000269" key="4">
    <source>
    </source>
</evidence>
<evidence type="ECO:0000269" key="5">
    <source>
    </source>
</evidence>
<evidence type="ECO:0000269" key="6">
    <source>
    </source>
</evidence>
<evidence type="ECO:0000269" key="7">
    <source>
    </source>
</evidence>
<evidence type="ECO:0000269" key="8">
    <source>
    </source>
</evidence>
<evidence type="ECO:0000269" key="9">
    <source>
    </source>
</evidence>
<evidence type="ECO:0000269" key="10">
    <source>
    </source>
</evidence>
<evidence type="ECO:0000269" key="11">
    <source>
    </source>
</evidence>
<evidence type="ECO:0000303" key="12">
    <source>
    </source>
</evidence>
<evidence type="ECO:0000303" key="13">
    <source>
    </source>
</evidence>
<evidence type="ECO:0000303" key="14">
    <source>
    </source>
</evidence>
<evidence type="ECO:0000303" key="15">
    <source>
    </source>
</evidence>
<evidence type="ECO:0000303" key="16">
    <source>
    </source>
</evidence>
<evidence type="ECO:0000303" key="17">
    <source>
    </source>
</evidence>
<evidence type="ECO:0000305" key="18"/>
<evidence type="ECO:0000305" key="19">
    <source>
    </source>
</evidence>
<evidence type="ECO:0000312" key="20">
    <source>
        <dbReference type="Araport" id="AT4G13850"/>
    </source>
</evidence>
<evidence type="ECO:0000312" key="21">
    <source>
        <dbReference type="EMBL" id="CAB36849.1"/>
    </source>
</evidence>
<keyword id="KW-0025">Alternative splicing</keyword>
<keyword id="KW-0143">Chaperone</keyword>
<keyword id="KW-0903">Direct protein sequencing</keyword>
<keyword id="KW-0496">Mitochondrion</keyword>
<keyword id="KW-0597">Phosphoprotein</keyword>
<keyword id="KW-1185">Reference proteome</keyword>
<keyword id="KW-0694">RNA-binding</keyword>
<keyword id="KW-0964">Secreted</keyword>
<keyword id="KW-0809">Transit peptide</keyword>
<proteinExistence type="evidence at protein level"/>
<reference key="1">
    <citation type="online journal article" date="1998" name="Plant Gene Register">
        <title>Identification of an Arabidopsis cDNA encoding a novel glycine rich RNA-binding protein and mapping of the gene family onto the Arabidopsis physical map.</title>
        <authorList>
            <person name="Macknight R."/>
            <person name="Love K."/>
            <person name="Dean C."/>
        </authorList>
        <locator>PGR98-152</locator>
    </citation>
    <scope>NUCLEOTIDE SEQUENCE [MRNA]</scope>
</reference>
<reference key="2">
    <citation type="journal article" date="2020" name="Mol. Plant">
        <title>A plant SMALL RNA-BINDING PROTEIN 1 family mediates cell-to-cell trafficking of RNAi signals.</title>
        <authorList>
            <person name="Yan Y."/>
            <person name="Ham B.-K."/>
            <person name="Chong Y.H."/>
            <person name="Yeh S.-D."/>
            <person name="Lucas W.J."/>
        </authorList>
    </citation>
    <scope>NUCLEOTIDE SEQUENCE [MRNA]</scope>
    <scope>FUNCTION</scope>
    <scope>DISRUPTION PHENOTYPE</scope>
    <scope>DOMAIN</scope>
    <scope>SUBUNIT</scope>
    <scope>GENE FAMILY</scope>
    <source>
        <strain>cv. Columbia</strain>
    </source>
</reference>
<reference key="3">
    <citation type="journal article" date="1999" name="Nature">
        <title>Sequence and analysis of chromosome 4 of the plant Arabidopsis thaliana.</title>
        <authorList>
            <person name="Mayer K.F.X."/>
            <person name="Schueller C."/>
            <person name="Wambutt R."/>
            <person name="Murphy G."/>
            <person name="Volckaert G."/>
            <person name="Pohl T."/>
            <person name="Duesterhoeft A."/>
            <person name="Stiekema W."/>
            <person name="Entian K.-D."/>
            <person name="Terryn N."/>
            <person name="Harris B."/>
            <person name="Ansorge W."/>
            <person name="Brandt P."/>
            <person name="Grivell L.A."/>
            <person name="Rieger M."/>
            <person name="Weichselgartner M."/>
            <person name="de Simone V."/>
            <person name="Obermaier B."/>
            <person name="Mache R."/>
            <person name="Mueller M."/>
            <person name="Kreis M."/>
            <person name="Delseny M."/>
            <person name="Puigdomenech P."/>
            <person name="Watson M."/>
            <person name="Schmidtheini T."/>
            <person name="Reichert B."/>
            <person name="Portetelle D."/>
            <person name="Perez-Alonso M."/>
            <person name="Boutry M."/>
            <person name="Bancroft I."/>
            <person name="Vos P."/>
            <person name="Hoheisel J."/>
            <person name="Zimmermann W."/>
            <person name="Wedler H."/>
            <person name="Ridley P."/>
            <person name="Langham S.-A."/>
            <person name="McCullagh B."/>
            <person name="Bilham L."/>
            <person name="Robben J."/>
            <person name="van der Schueren J."/>
            <person name="Grymonprez B."/>
            <person name="Chuang Y.-J."/>
            <person name="Vandenbussche F."/>
            <person name="Braeken M."/>
            <person name="Weltjens I."/>
            <person name="Voet M."/>
            <person name="Bastiaens I."/>
            <person name="Aert R."/>
            <person name="Defoor E."/>
            <person name="Weitzenegger T."/>
            <person name="Bothe G."/>
            <person name="Ramsperger U."/>
            <person name="Hilbert H."/>
            <person name="Braun M."/>
            <person name="Holzer E."/>
            <person name="Brandt A."/>
            <person name="Peters S."/>
            <person name="van Staveren M."/>
            <person name="Dirkse W."/>
            <person name="Mooijman P."/>
            <person name="Klein Lankhorst R."/>
            <person name="Rose M."/>
            <person name="Hauf J."/>
            <person name="Koetter P."/>
            <person name="Berneiser S."/>
            <person name="Hempel S."/>
            <person name="Feldpausch M."/>
            <person name="Lamberth S."/>
            <person name="Van den Daele H."/>
            <person name="De Keyser A."/>
            <person name="Buysshaert C."/>
            <person name="Gielen J."/>
            <person name="Villarroel R."/>
            <person name="De Clercq R."/>
            <person name="van Montagu M."/>
            <person name="Rogers J."/>
            <person name="Cronin A."/>
            <person name="Quail M.A."/>
            <person name="Bray-Allen S."/>
            <person name="Clark L."/>
            <person name="Doggett J."/>
            <person name="Hall S."/>
            <person name="Kay M."/>
            <person name="Lennard N."/>
            <person name="McLay K."/>
            <person name="Mayes R."/>
            <person name="Pettett A."/>
            <person name="Rajandream M.A."/>
            <person name="Lyne M."/>
            <person name="Benes V."/>
            <person name="Rechmann S."/>
            <person name="Borkova D."/>
            <person name="Bloecker H."/>
            <person name="Scharfe M."/>
            <person name="Grimm M."/>
            <person name="Loehnert T.-H."/>
            <person name="Dose S."/>
            <person name="de Haan M."/>
            <person name="Maarse A.C."/>
            <person name="Schaefer M."/>
            <person name="Mueller-Auer S."/>
            <person name="Gabel C."/>
            <person name="Fuchs M."/>
            <person name="Fartmann B."/>
            <person name="Granderath K."/>
            <person name="Dauner D."/>
            <person name="Herzl A."/>
            <person name="Neumann S."/>
            <person name="Argiriou A."/>
            <person name="Vitale D."/>
            <person name="Liguori R."/>
            <person name="Piravandi E."/>
            <person name="Massenet O."/>
            <person name="Quigley F."/>
            <person name="Clabauld G."/>
            <person name="Muendlein A."/>
            <person name="Felber R."/>
            <person name="Schnabl S."/>
            <person name="Hiller R."/>
            <person name="Schmidt W."/>
            <person name="Lecharny A."/>
            <person name="Aubourg S."/>
            <person name="Chefdor F."/>
            <person name="Cooke R."/>
            <person name="Berger C."/>
            <person name="Monfort A."/>
            <person name="Casacuberta E."/>
            <person name="Gibbons T."/>
            <person name="Weber N."/>
            <person name="Vandenbol M."/>
            <person name="Bargues M."/>
            <person name="Terol J."/>
            <person name="Torres A."/>
            <person name="Perez-Perez A."/>
            <person name="Purnelle B."/>
            <person name="Bent E."/>
            <person name="Johnson S."/>
            <person name="Tacon D."/>
            <person name="Jesse T."/>
            <person name="Heijnen L."/>
            <person name="Schwarz S."/>
            <person name="Scholler P."/>
            <person name="Heber S."/>
            <person name="Francs P."/>
            <person name="Bielke C."/>
            <person name="Frishman D."/>
            <person name="Haase D."/>
            <person name="Lemcke K."/>
            <person name="Mewes H.-W."/>
            <person name="Stocker S."/>
            <person name="Zaccaria P."/>
            <person name="Bevan M."/>
            <person name="Wilson R.K."/>
            <person name="de la Bastide M."/>
            <person name="Habermann K."/>
            <person name="Parnell L."/>
            <person name="Dedhia N."/>
            <person name="Gnoj L."/>
            <person name="Schutz K."/>
            <person name="Huang E."/>
            <person name="Spiegel L."/>
            <person name="Sekhon M."/>
            <person name="Murray J."/>
            <person name="Sheet P."/>
            <person name="Cordes M."/>
            <person name="Abu-Threideh J."/>
            <person name="Stoneking T."/>
            <person name="Kalicki J."/>
            <person name="Graves T."/>
            <person name="Harmon G."/>
            <person name="Edwards J."/>
            <person name="Latreille P."/>
            <person name="Courtney L."/>
            <person name="Cloud J."/>
            <person name="Abbott A."/>
            <person name="Scott K."/>
            <person name="Johnson D."/>
            <person name="Minx P."/>
            <person name="Bentley D."/>
            <person name="Fulton B."/>
            <person name="Miller N."/>
            <person name="Greco T."/>
            <person name="Kemp K."/>
            <person name="Kramer J."/>
            <person name="Fulton L."/>
            <person name="Mardis E."/>
            <person name="Dante M."/>
            <person name="Pepin K."/>
            <person name="Hillier L.W."/>
            <person name="Nelson J."/>
            <person name="Spieth J."/>
            <person name="Ryan E."/>
            <person name="Andrews S."/>
            <person name="Geisel C."/>
            <person name="Layman D."/>
            <person name="Du H."/>
            <person name="Ali J."/>
            <person name="Berghoff A."/>
            <person name="Jones K."/>
            <person name="Drone K."/>
            <person name="Cotton M."/>
            <person name="Joshu C."/>
            <person name="Antonoiu B."/>
            <person name="Zidanic M."/>
            <person name="Strong C."/>
            <person name="Sun H."/>
            <person name="Lamar B."/>
            <person name="Yordan C."/>
            <person name="Ma P."/>
            <person name="Zhong J."/>
            <person name="Preston R."/>
            <person name="Vil D."/>
            <person name="Shekher M."/>
            <person name="Matero A."/>
            <person name="Shah R."/>
            <person name="Swaby I.K."/>
            <person name="O'Shaughnessy A."/>
            <person name="Rodriguez M."/>
            <person name="Hoffman J."/>
            <person name="Till S."/>
            <person name="Granat S."/>
            <person name="Shohdy N."/>
            <person name="Hasegawa A."/>
            <person name="Hameed A."/>
            <person name="Lodhi M."/>
            <person name="Johnson A."/>
            <person name="Chen E."/>
            <person name="Marra M.A."/>
            <person name="Martienssen R."/>
            <person name="McCombie W.R."/>
        </authorList>
    </citation>
    <scope>NUCLEOTIDE SEQUENCE [LARGE SCALE GENOMIC DNA]</scope>
    <source>
        <strain>cv. Columbia</strain>
    </source>
</reference>
<reference key="4">
    <citation type="journal article" date="2017" name="Plant J.">
        <title>Araport11: a complete reannotation of the Arabidopsis thaliana reference genome.</title>
        <authorList>
            <person name="Cheng C.Y."/>
            <person name="Krishnakumar V."/>
            <person name="Chan A.P."/>
            <person name="Thibaud-Nissen F."/>
            <person name="Schobel S."/>
            <person name="Town C.D."/>
        </authorList>
    </citation>
    <scope>GENOME REANNOTATION</scope>
    <source>
        <strain>cv. Columbia</strain>
    </source>
</reference>
<reference key="5">
    <citation type="journal article" date="2003" name="Science">
        <title>Empirical analysis of transcriptional activity in the Arabidopsis genome.</title>
        <authorList>
            <person name="Yamada K."/>
            <person name="Lim J."/>
            <person name="Dale J.M."/>
            <person name="Chen H."/>
            <person name="Shinn P."/>
            <person name="Palm C.J."/>
            <person name="Southwick A.M."/>
            <person name="Wu H.C."/>
            <person name="Kim C.J."/>
            <person name="Nguyen M."/>
            <person name="Pham P.K."/>
            <person name="Cheuk R.F."/>
            <person name="Karlin-Newmann G."/>
            <person name="Liu S.X."/>
            <person name="Lam B."/>
            <person name="Sakano H."/>
            <person name="Wu T."/>
            <person name="Yu G."/>
            <person name="Miranda M."/>
            <person name="Quach H.L."/>
            <person name="Tripp M."/>
            <person name="Chang C.H."/>
            <person name="Lee J.M."/>
            <person name="Toriumi M.J."/>
            <person name="Chan M.M."/>
            <person name="Tang C.C."/>
            <person name="Onodera C.S."/>
            <person name="Deng J.M."/>
            <person name="Akiyama K."/>
            <person name="Ansari Y."/>
            <person name="Arakawa T."/>
            <person name="Banh J."/>
            <person name="Banno F."/>
            <person name="Bowser L."/>
            <person name="Brooks S.Y."/>
            <person name="Carninci P."/>
            <person name="Chao Q."/>
            <person name="Choy N."/>
            <person name="Enju A."/>
            <person name="Goldsmith A.D."/>
            <person name="Gurjal M."/>
            <person name="Hansen N.F."/>
            <person name="Hayashizaki Y."/>
            <person name="Johnson-Hopson C."/>
            <person name="Hsuan V.W."/>
            <person name="Iida K."/>
            <person name="Karnes M."/>
            <person name="Khan S."/>
            <person name="Koesema E."/>
            <person name="Ishida J."/>
            <person name="Jiang P.X."/>
            <person name="Jones T."/>
            <person name="Kawai J."/>
            <person name="Kamiya A."/>
            <person name="Meyers C."/>
            <person name="Nakajima M."/>
            <person name="Narusaka M."/>
            <person name="Seki M."/>
            <person name="Sakurai T."/>
            <person name="Satou M."/>
            <person name="Tamse R."/>
            <person name="Vaysberg M."/>
            <person name="Wallender E.K."/>
            <person name="Wong C."/>
            <person name="Yamamura Y."/>
            <person name="Yuan S."/>
            <person name="Shinozaki K."/>
            <person name="Davis R.W."/>
            <person name="Theologis A."/>
            <person name="Ecker J.R."/>
        </authorList>
    </citation>
    <scope>NUCLEOTIDE SEQUENCE [LARGE SCALE MRNA]</scope>
    <source>
        <strain>cv. Columbia</strain>
    </source>
</reference>
<reference key="6">
    <citation type="submission" date="2002-03" db="EMBL/GenBank/DDBJ databases">
        <title>Full-length cDNA from Arabidopsis thaliana.</title>
        <authorList>
            <person name="Brover V.V."/>
            <person name="Troukhan M.E."/>
            <person name="Alexandrov N.A."/>
            <person name="Lu Y.-P."/>
            <person name="Flavell R.B."/>
            <person name="Feldmann K.A."/>
        </authorList>
    </citation>
    <scope>NUCLEOTIDE SEQUENCE [LARGE SCALE MRNA]</scope>
</reference>
<reference key="7">
    <citation type="submission" date="1992-11" db="EMBL/GenBank/DDBJ databases">
        <authorList>
            <person name="Quigley F.R."/>
        </authorList>
    </citation>
    <scope>NUCLEOTIDE SEQUENCE [MRNA] OF 20-158</scope>
    <source>
        <strain>cv. C24</strain>
        <tissue>Flower</tissue>
    </source>
</reference>
<reference key="8">
    <citation type="journal article" date="1993" name="Plant J.">
        <title>An inventory of 1152 expressed sequence tags obtained by partial sequencing of cDNAs from Arabidopsis thaliana.</title>
        <authorList>
            <person name="Hoefte H."/>
            <person name="Desprez T."/>
            <person name="Amselem J."/>
            <person name="Chiapello H."/>
            <person name="Rouze P."/>
            <person name="Caboche M."/>
            <person name="Moisan A."/>
            <person name="Jourjon M.-F."/>
            <person name="Charpenteau J.-L."/>
            <person name="Berthomieu P."/>
            <person name="Guerrier D."/>
            <person name="Giraudat J."/>
            <person name="Quigley F."/>
            <person name="Thomas F."/>
            <person name="Yu D.-Y."/>
            <person name="Mache R."/>
            <person name="Raynal M."/>
            <person name="Cooke R."/>
            <person name="Grellet F."/>
            <person name="Delseny M."/>
            <person name="Parmentier Y."/>
            <person name="de Marcillac G."/>
            <person name="Gigot C."/>
            <person name="Fleck J."/>
            <person name="Philipps G."/>
            <person name="Axelos M."/>
            <person name="Bardet C."/>
            <person name="Tremousaygue D."/>
            <person name="Lescure B."/>
        </authorList>
    </citation>
    <scope>NUCLEOTIDE SEQUENCE [LARGE SCALE MRNA] OF 20-85</scope>
    <source>
        <strain>cv. C24</strain>
        <tissue>Flower bud</tissue>
    </source>
</reference>
<reference key="9">
    <citation type="journal article" date="2001" name="Plant Physiol.">
        <title>Proteomic approach to identify novel mitochondrial proteins in Arabidopsis.</title>
        <authorList>
            <person name="Kruft V."/>
            <person name="Eubel H."/>
            <person name="Jaensch L."/>
            <person name="Werhahn W."/>
            <person name="Braun H.-P."/>
        </authorList>
    </citation>
    <scope>PROTEIN SEQUENCE OF 35-48</scope>
    <scope>SUBCELLULAR LOCATION</scope>
    <source>
        <tissue>Leaf</tissue>
        <tissue>Stem</tissue>
    </source>
</reference>
<reference key="10">
    <citation type="journal article" date="2002" name="Nucleic Acids Res.">
        <title>Genome analysis: RNA recognition motif (RRM) and K homology (KH) domain RNA-binding proteins from the flowering plant Arabidopsis thaliana.</title>
        <authorList>
            <person name="Lorkovic Z.J."/>
            <person name="Barta A."/>
        </authorList>
    </citation>
    <scope>GENE FAMILY</scope>
</reference>
<reference key="11">
    <citation type="journal article" date="2002" name="Proc. Natl. Acad. Sci. U.S.A.">
        <title>A family of RRM-type RNA-binding proteins specific to plant mitochondria.</title>
        <authorList>
            <person name="Vermel M."/>
            <person name="Guermann B."/>
            <person name="Delage L."/>
            <person name="Grienenberger J.M."/>
            <person name="Marechal-Drouard L."/>
            <person name="Gualberto J.M."/>
        </authorList>
    </citation>
    <scope>SUBCELLULAR LOCATION</scope>
    <scope>FUNCTION</scope>
    <scope>INDUCTION BY COLD</scope>
</reference>
<reference key="12">
    <citation type="journal article" date="2004" name="Plant Cell">
        <title>Experimental analysis of the Arabidopsis mitochondrial proteome highlights signaling and regulatory components, provides assessment of targeting prediction programs, and indicates plant-specific mitochondrial proteins.</title>
        <authorList>
            <person name="Heazlewood J.L."/>
            <person name="Tonti-Filippini J.S."/>
            <person name="Gout A.M."/>
            <person name="Day D.A."/>
            <person name="Whelan J."/>
            <person name="Millar A.H."/>
        </authorList>
    </citation>
    <scope>IDENTIFICATION BY MASS SPECTROMETRY</scope>
    <scope>SUBCELLULAR LOCATION [LARGE SCALE ANALYSIS]</scope>
    <source>
        <strain>cv. Landsberg erecta</strain>
    </source>
</reference>
<reference key="13">
    <citation type="journal article" date="2005" name="J. Exp. Bot.">
        <title>Characterization of transgenic Arabidopsis plants overexpressing GR-RBP4 under high salinity, dehydration, or cold stress.</title>
        <authorList>
            <person name="Kwak K.J."/>
            <person name="Kim Y.O."/>
            <person name="Kang H."/>
        </authorList>
    </citation>
    <scope>INDUCTION BY COLD AND DEHYDRATION</scope>
    <scope>FUNCTION</scope>
</reference>
<reference key="14">
    <citation type="journal article" date="2007" name="Nucleic Acids Res.">
        <title>Cold shock domain proteins and glycine-rich RNA-binding proteins from Arabidopsis thaliana can promote the cold adaptation process in Escherichia coli.</title>
        <authorList>
            <person name="Kim J.S."/>
            <person name="Park S.J."/>
            <person name="Kwak K.J."/>
            <person name="Kim Y.O."/>
            <person name="Kim J.Y."/>
            <person name="Song J."/>
            <person name="Jang B."/>
            <person name="Jung C.-H."/>
            <person name="Kang H."/>
        </authorList>
    </citation>
    <scope>INDUCTION BY COLD</scope>
</reference>
<reference key="15">
    <citation type="journal article" date="2007" name="Plant J.">
        <title>Functional characterization of a glycine-rich RNA-binding protein 2 in Arabidopsis thaliana under abiotic stress conditions.</title>
        <authorList>
            <person name="Kim J.Y."/>
            <person name="Park S.J."/>
            <person name="Jang B."/>
            <person name="Jung C.-H."/>
            <person name="Ahn S.J."/>
            <person name="Goh C.-H."/>
            <person name="Cho K."/>
            <person name="Han O."/>
            <person name="Kang H."/>
        </authorList>
    </citation>
    <scope>INDUCTION BY COLD</scope>
    <scope>DISRUPTION PHENOTYPE</scope>
    <scope>FUNCTION</scope>
</reference>
<reference key="16">
    <citation type="journal article" date="2010" name="Mol. Biol. Rep.">
        <title>A proteomic analysis of oligo(dT)-bound mRNP containing oxidative stress-induced Arabidopsis thaliana RNA-binding proteins ATGRP7 and ATGRP8.</title>
        <authorList>
            <person name="Schmidt F."/>
            <person name="Marnef A."/>
            <person name="Cheung M.K."/>
            <person name="Wilson I."/>
            <person name="Hancock J."/>
            <person name="Staiger D."/>
            <person name="Ladomery M."/>
        </authorList>
    </citation>
    <scope>IDENTIFICATION BY MASS SPECTROMETRY</scope>
    <scope>INDUCTION BY HYDROGEN PEROXIDE</scope>
</reference>
<reference key="17">
    <citation type="journal article" date="2010" name="Plant Signal. Behav.">
        <title>Functional diversity of the plant glycine-rich proteins superfamily.</title>
        <authorList>
            <person name="Mangeon A."/>
            <person name="Junqueira R.M."/>
            <person name="Sachetto-Martins G."/>
        </authorList>
    </citation>
    <scope>NOMENCLATURE</scope>
</reference>
<reference key="18">
    <citation type="journal article" date="2017" name="J. Exp. Bot.">
        <title>ORRM5, an RNA recognition motif-containing protein, has a unique effect on mitochondrial RNA editing.</title>
        <authorList>
            <person name="Shi X."/>
            <person name="Castandet B."/>
            <person name="Germain A."/>
            <person name="Hanson M.R."/>
            <person name="Bentolila S."/>
        </authorList>
    </citation>
    <scope>FUNCTION</scope>
    <scope>DISRUPTION PHENOTYPE</scope>
    <scope>DOMAIN</scope>
    <scope>INTERACTION WITH ORRM2; RBG3/ORRM3 AND RBG5/ORRM4</scope>
    <source>
        <strain>cv. Columbia</strain>
    </source>
</reference>
<accession>Q9SVM8</accession>
<accession>A0A6B9JA45</accession>
<accession>Q39105</accession>
<accession>Q41988</accession>
<sequence length="158" mass="15702">MAFCNKLGGLLRQNISSNGNVPVTSMLGSLRLMSTKLFIGGLSWGTDDASLRDAFAHFGDVVDAKVIVDRETGRSRGFGFVNFNDEGAATAAISEMDGKELNGRHIRVNPANDRPSAPRAYGGGGGYSGGGGGYGGGGGGYGGGGGGYGGGGDGGGGF</sequence>
<gene>
    <name evidence="15" type="primary">RBG2</name>
    <name evidence="12 14" type="synonym">GR-RBP2</name>
    <name evidence="15" type="synonym">GRP2</name>
    <name evidence="13" type="synonym">MRBP1A</name>
    <name evidence="16" type="synonym">ORRM5</name>
    <name evidence="17" type="synonym">SRBP3</name>
    <name evidence="20" type="ordered locus">At4g13850</name>
    <name evidence="21" type="ORF">F18A5.240</name>
</gene>
<organism>
    <name type="scientific">Arabidopsis thaliana</name>
    <name type="common">Mouse-ear cress</name>
    <dbReference type="NCBI Taxonomy" id="3702"/>
    <lineage>
        <taxon>Eukaryota</taxon>
        <taxon>Viridiplantae</taxon>
        <taxon>Streptophyta</taxon>
        <taxon>Embryophyta</taxon>
        <taxon>Tracheophyta</taxon>
        <taxon>Spermatophyta</taxon>
        <taxon>Magnoliopsida</taxon>
        <taxon>eudicotyledons</taxon>
        <taxon>Gunneridae</taxon>
        <taxon>Pentapetalae</taxon>
        <taxon>rosids</taxon>
        <taxon>malvids</taxon>
        <taxon>Brassicales</taxon>
        <taxon>Brassicaceae</taxon>
        <taxon>Camelineae</taxon>
        <taxon>Arabidopsis</taxon>
    </lineage>
</organism>
<feature type="transit peptide" description="Mitochondrion" evidence="3">
    <location>
        <begin position="1"/>
        <end position="34"/>
    </location>
</feature>
<feature type="chain" id="PRO_0000031018" description="Glycine-rich RNA-binding protein 2, mitochondrial">
    <location>
        <begin position="35"/>
        <end position="158"/>
    </location>
</feature>
<feature type="domain" description="RRM" evidence="2">
    <location>
        <begin position="35"/>
        <end position="113"/>
    </location>
</feature>
<feature type="region of interest" description="Glycine-rich (GR) required for cell-to-cell movement" evidence="19">
    <location>
        <begin position="122"/>
        <end position="157"/>
    </location>
</feature>
<feature type="modified residue" description="Phosphoserine" evidence="1">
    <location>
        <position position="43"/>
    </location>
</feature>
<name>RBG2_ARATH</name>
<dbReference type="EMBL" id="AJ002892">
    <property type="protein sequence ID" value="CAA05727.1"/>
    <property type="status" value="ALT_SEQ"/>
    <property type="molecule type" value="mRNA"/>
</dbReference>
<dbReference type="EMBL" id="MN064665">
    <property type="protein sequence ID" value="QGZ19400.1"/>
    <property type="molecule type" value="mRNA"/>
</dbReference>
<dbReference type="EMBL" id="AL035528">
    <property type="protein sequence ID" value="CAB36849.1"/>
    <property type="molecule type" value="Genomic_DNA"/>
</dbReference>
<dbReference type="EMBL" id="AL161537">
    <property type="protein sequence ID" value="CAB78427.1"/>
    <property type="molecule type" value="Genomic_DNA"/>
</dbReference>
<dbReference type="EMBL" id="CP002687">
    <property type="protein sequence ID" value="AEE83333.1"/>
    <property type="molecule type" value="Genomic_DNA"/>
</dbReference>
<dbReference type="EMBL" id="AY072361">
    <property type="protein sequence ID" value="AAL62353.1"/>
    <property type="molecule type" value="mRNA"/>
</dbReference>
<dbReference type="EMBL" id="BT002197">
    <property type="protein sequence ID" value="AAN72208.1"/>
    <property type="molecule type" value="mRNA"/>
</dbReference>
<dbReference type="EMBL" id="AY085621">
    <property type="protein sequence ID" value="AAM62842.1"/>
    <property type="molecule type" value="mRNA"/>
</dbReference>
<dbReference type="EMBL" id="X69377">
    <property type="protein sequence ID" value="CAA49174.1"/>
    <property type="molecule type" value="mRNA"/>
</dbReference>
<dbReference type="EMBL" id="Z18189">
    <property type="protein sequence ID" value="CAA79126.1"/>
    <property type="molecule type" value="mRNA"/>
</dbReference>
<dbReference type="PIR" id="S31443">
    <property type="entry name" value="S31443"/>
</dbReference>
<dbReference type="PIR" id="T05254">
    <property type="entry name" value="T05254"/>
</dbReference>
<dbReference type="RefSeq" id="NP_193121.1">
    <molecule id="Q9SVM8-1"/>
    <property type="nucleotide sequence ID" value="NM_117459.4"/>
</dbReference>
<dbReference type="SMR" id="Q9SVM8"/>
<dbReference type="BioGRID" id="12316">
    <property type="interactions" value="3"/>
</dbReference>
<dbReference type="FunCoup" id="Q9SVM8">
    <property type="interactions" value="3183"/>
</dbReference>
<dbReference type="IntAct" id="Q9SVM8">
    <property type="interactions" value="3"/>
</dbReference>
<dbReference type="STRING" id="3702.Q9SVM8"/>
<dbReference type="iPTMnet" id="Q9SVM8"/>
<dbReference type="MetOSite" id="Q9SVM8"/>
<dbReference type="SwissPalm" id="Q9SVM8"/>
<dbReference type="PaxDb" id="3702-AT4G13850.1"/>
<dbReference type="ProteomicsDB" id="225908">
    <molecule id="Q9SVM8-1"/>
</dbReference>
<dbReference type="EnsemblPlants" id="AT4G13850.1">
    <molecule id="Q9SVM8-1"/>
    <property type="protein sequence ID" value="AT4G13850.1"/>
    <property type="gene ID" value="AT4G13850"/>
</dbReference>
<dbReference type="GeneID" id="827019"/>
<dbReference type="Gramene" id="AT4G13850.1">
    <molecule id="Q9SVM8-1"/>
    <property type="protein sequence ID" value="AT4G13850.1"/>
    <property type="gene ID" value="AT4G13850"/>
</dbReference>
<dbReference type="KEGG" id="ath:AT4G13850"/>
<dbReference type="Araport" id="AT4G13850"/>
<dbReference type="TAIR" id="AT4G13850">
    <property type="gene designation" value="RBGA5"/>
</dbReference>
<dbReference type="eggNOG" id="KOG0118">
    <property type="taxonomic scope" value="Eukaryota"/>
</dbReference>
<dbReference type="InParanoid" id="Q9SVM8"/>
<dbReference type="OMA" id="FIEMADD"/>
<dbReference type="OrthoDB" id="439808at2759"/>
<dbReference type="PhylomeDB" id="Q9SVM8"/>
<dbReference type="CD-CODE" id="4299E36E">
    <property type="entry name" value="Nucleolus"/>
</dbReference>
<dbReference type="PRO" id="PR:Q9SVM8"/>
<dbReference type="Proteomes" id="UP000006548">
    <property type="component" value="Chromosome 4"/>
</dbReference>
<dbReference type="ExpressionAtlas" id="Q9SVM8">
    <property type="expression patterns" value="baseline and differential"/>
</dbReference>
<dbReference type="GO" id="GO:0005829">
    <property type="term" value="C:cytosol"/>
    <property type="evidence" value="ECO:0007005"/>
    <property type="project" value="TAIR"/>
</dbReference>
<dbReference type="GO" id="GO:0005615">
    <property type="term" value="C:extracellular space"/>
    <property type="evidence" value="ECO:0000314"/>
    <property type="project" value="UniProtKB"/>
</dbReference>
<dbReference type="GO" id="GO:0005739">
    <property type="term" value="C:mitochondrion"/>
    <property type="evidence" value="ECO:0000314"/>
    <property type="project" value="UniProtKB"/>
</dbReference>
<dbReference type="GO" id="GO:0005524">
    <property type="term" value="F:ATP binding"/>
    <property type="evidence" value="ECO:0007005"/>
    <property type="project" value="TAIR"/>
</dbReference>
<dbReference type="GO" id="GO:0005507">
    <property type="term" value="F:copper ion binding"/>
    <property type="evidence" value="ECO:0007005"/>
    <property type="project" value="TAIR"/>
</dbReference>
<dbReference type="GO" id="GO:0003690">
    <property type="term" value="F:double-stranded DNA binding"/>
    <property type="evidence" value="ECO:0000314"/>
    <property type="project" value="TAIR"/>
</dbReference>
<dbReference type="GO" id="GO:0035198">
    <property type="term" value="F:miRNA binding"/>
    <property type="evidence" value="ECO:0000314"/>
    <property type="project" value="UniProtKB"/>
</dbReference>
<dbReference type="GO" id="GO:0034336">
    <property type="term" value="F:misfolded RNA binding"/>
    <property type="evidence" value="ECO:0000314"/>
    <property type="project" value="UniProtKB"/>
</dbReference>
<dbReference type="GO" id="GO:0003729">
    <property type="term" value="F:mRNA binding"/>
    <property type="evidence" value="ECO:0000314"/>
    <property type="project" value="TAIR"/>
</dbReference>
<dbReference type="GO" id="GO:0003723">
    <property type="term" value="F:RNA binding"/>
    <property type="evidence" value="ECO:0000314"/>
    <property type="project" value="UniProtKB"/>
</dbReference>
<dbReference type="GO" id="GO:0003697">
    <property type="term" value="F:single-stranded DNA binding"/>
    <property type="evidence" value="ECO:0000314"/>
    <property type="project" value="TAIR"/>
</dbReference>
<dbReference type="GO" id="GO:0003727">
    <property type="term" value="F:single-stranded RNA binding"/>
    <property type="evidence" value="ECO:0000314"/>
    <property type="project" value="UniProtKB"/>
</dbReference>
<dbReference type="GO" id="GO:0035197">
    <property type="term" value="F:siRNA binding"/>
    <property type="evidence" value="ECO:0000314"/>
    <property type="project" value="UniProtKB"/>
</dbReference>
<dbReference type="GO" id="GO:0009631">
    <property type="term" value="P:cold acclimation"/>
    <property type="evidence" value="ECO:0000315"/>
    <property type="project" value="UniProtKB"/>
</dbReference>
<dbReference type="GO" id="GO:0006858">
    <property type="term" value="P:extracellular transport"/>
    <property type="evidence" value="ECO:0000314"/>
    <property type="project" value="UniProtKB"/>
</dbReference>
<dbReference type="GO" id="GO:1990428">
    <property type="term" value="P:miRNA transport"/>
    <property type="evidence" value="ECO:0000314"/>
    <property type="project" value="UniProtKB"/>
</dbReference>
<dbReference type="GO" id="GO:0090615">
    <property type="term" value="P:mitochondrial mRNA processing"/>
    <property type="evidence" value="ECO:0000315"/>
    <property type="project" value="UniProtKB"/>
</dbReference>
<dbReference type="GO" id="GO:0060567">
    <property type="term" value="P:negative regulation of termination of DNA-templated transcription"/>
    <property type="evidence" value="ECO:0000314"/>
    <property type="project" value="UniProtKB"/>
</dbReference>
<dbReference type="GO" id="GO:0050688">
    <property type="term" value="P:regulation of defense response to virus"/>
    <property type="evidence" value="ECO:0000314"/>
    <property type="project" value="UniProtKB"/>
</dbReference>
<dbReference type="GO" id="GO:0009409">
    <property type="term" value="P:response to cold"/>
    <property type="evidence" value="ECO:0000315"/>
    <property type="project" value="TAIR"/>
</dbReference>
<dbReference type="GO" id="GO:0006970">
    <property type="term" value="P:response to osmotic stress"/>
    <property type="evidence" value="ECO:0000315"/>
    <property type="project" value="TAIR"/>
</dbReference>
<dbReference type="GO" id="GO:0009651">
    <property type="term" value="P:response to salt stress"/>
    <property type="evidence" value="ECO:0000315"/>
    <property type="project" value="UniProtKB"/>
</dbReference>
<dbReference type="GO" id="GO:0009414">
    <property type="term" value="P:response to water deprivation"/>
    <property type="evidence" value="ECO:0000270"/>
    <property type="project" value="UniProtKB"/>
</dbReference>
<dbReference type="GO" id="GO:0050658">
    <property type="term" value="P:RNA transport"/>
    <property type="evidence" value="ECO:0000314"/>
    <property type="project" value="UniProtKB"/>
</dbReference>
<dbReference type="GO" id="GO:0009845">
    <property type="term" value="P:seed germination"/>
    <property type="evidence" value="ECO:0000315"/>
    <property type="project" value="TAIR"/>
</dbReference>
<dbReference type="CDD" id="cd21608">
    <property type="entry name" value="RRM2_NsCP33_like"/>
    <property type="match status" value="1"/>
</dbReference>
<dbReference type="FunFam" id="3.30.70.330:FF:000612">
    <property type="entry name" value="Glycine-rich RNA-binding protein 2"/>
    <property type="match status" value="1"/>
</dbReference>
<dbReference type="Gene3D" id="3.30.70.330">
    <property type="match status" value="1"/>
</dbReference>
<dbReference type="InterPro" id="IPR012677">
    <property type="entry name" value="Nucleotide-bd_a/b_plait_sf"/>
</dbReference>
<dbReference type="InterPro" id="IPR035979">
    <property type="entry name" value="RBD_domain_sf"/>
</dbReference>
<dbReference type="InterPro" id="IPR048289">
    <property type="entry name" value="RRM2_NsCP33-like"/>
</dbReference>
<dbReference type="InterPro" id="IPR000504">
    <property type="entry name" value="RRM_dom"/>
</dbReference>
<dbReference type="InterPro" id="IPR052462">
    <property type="entry name" value="SLIRP/GR-RBP-like"/>
</dbReference>
<dbReference type="PANTHER" id="PTHR48027">
    <property type="entry name" value="HETEROGENEOUS NUCLEAR RIBONUCLEOPROTEIN 87F-RELATED"/>
    <property type="match status" value="1"/>
</dbReference>
<dbReference type="Pfam" id="PF00076">
    <property type="entry name" value="RRM_1"/>
    <property type="match status" value="1"/>
</dbReference>
<dbReference type="SMART" id="SM00360">
    <property type="entry name" value="RRM"/>
    <property type="match status" value="1"/>
</dbReference>
<dbReference type="SUPFAM" id="SSF54928">
    <property type="entry name" value="RNA-binding domain, RBD"/>
    <property type="match status" value="1"/>
</dbReference>
<dbReference type="PROSITE" id="PS50102">
    <property type="entry name" value="RRM"/>
    <property type="match status" value="1"/>
</dbReference>
<protein>
    <recommendedName>
        <fullName evidence="12 14">Glycine-rich RNA-binding protein 2, mitochondrial</fullName>
        <shortName evidence="12 14">AtGR-RBP2</shortName>
    </recommendedName>
    <alternativeName>
        <fullName evidence="15">AtRBG2</fullName>
    </alternativeName>
    <alternativeName>
        <fullName evidence="15">Glycine-rich protein 2</fullName>
        <shortName evidence="15">AtGRP2</shortName>
    </alternativeName>
    <alternativeName>
        <fullName evidence="13">Mitochondrial RNA-binding protein 1a</fullName>
        <shortName evidence="13">At-mRBP1a</shortName>
    </alternativeName>
    <alternativeName>
        <fullName evidence="16">Organelle RNA recognition motif-containing protein 5</fullName>
    </alternativeName>
    <alternativeName>
        <fullName evidence="17">Small RNA binding protein 3</fullName>
        <shortName evidence="17">AtSRBP3</shortName>
    </alternativeName>
</protein>
<comment type="function">
    <text evidence="4 6 8 10 11">Promotes the cis-splicing and editing of several mitochondrial RNAs (including NAD5 transcripts) (PubMed:28549172). Plays a role in RNA transcription or processing during stress. Binds RNAs and DNAs sequence with a preference to single-stranded nucleic acids. Displays strong affinity to poly(U) sequence. Exerts cold and freezing tolerance, probably by exhibiting an RNA chaperone activity during the cold and freezing adaptation process. Mediates cell-to-cell trafficking of RNA interference (RNAi) signals (small RNAs (sRNA), e.g. small interfering RNA (siRNA) and microRNA (miRNA)) which regulate growth and development, as well as responses to environmental inputs, including pathogen attack; can compromise zucchini yellow mosaic virus (ZYMV) and tobacco rattle virus (TRV) infections at the early stage (PubMed:31812689).</text>
</comment>
<comment type="subunit">
    <text evidence="10 11">Binds to small phloem-mobile single-stranded RNAs (ss-sRNA, e.g. small interfering RNA (siRNA) and microRNA (miRNA)) in the phloeme exudate, including viral-derived sRNA (vsiRNA) (PubMed:31812689). Interacts with ORRM2, RBG3/ORRM3 and RBG5/ORRM4 (PubMed:28549172).</text>
</comment>
<comment type="subcellular location">
    <subcellularLocation>
        <location evidence="3 4 5">Mitochondrion</location>
    </subcellularLocation>
    <subcellularLocation>
        <location evidence="11">Secreted</location>
    </subcellularLocation>
    <text evidence="11">Observed in the phloem translocation stream.</text>
</comment>
<comment type="alternative products">
    <event type="alternative splicing"/>
    <isoform>
        <id>Q9SVM8-1</id>
        <name>1</name>
        <sequence type="displayed"/>
    </isoform>
    <text>A number of isoforms are produced. According to EST sequences.</text>
</comment>
<comment type="induction">
    <text evidence="4 6 7 8 9">Up-regulated by cold stress and down-regulated by dehydration stress. Induced by hydrogen peroxide (at the protein level).</text>
</comment>
<comment type="domain">
    <text evidence="11">The glycine-rich (GR) domain is necessary and sufficient for cell-to-cell movement and to interefere with zucchini yellow mosaic virus (ZYMV) infection.</text>
</comment>
<comment type="domain">
    <text evidence="10">The RRM domain is required to promote mitochondrial RNA processing.</text>
</comment>
<comment type="disruption phenotype">
    <text evidence="8 10 11">Defects in seed germination under salt or cold stress (PubMed:17376161). Altered seedling growth under cold stress (PubMed:17376161). Delayed growth and late flowering associated with reduced mitochondrial RNA editing efficiency, including the cis-splicing of the first intron of the NAD5 transcript (PubMed:28549172). The triple mutant srbp1 srbp2 srbp3 is more susceptible to tobacco rattle virus (TRV) (PubMed:31812689).</text>
</comment>
<comment type="miscellaneous">
    <text>Plants overexpressing RBG2 confer freezing tolerance.</text>
</comment>
<comment type="similarity">
    <text evidence="18">Belongs to the GR-RBP family.</text>
</comment>
<comment type="sequence caution" evidence="18">
    <conflict type="miscellaneous discrepancy">
        <sequence resource="EMBL-CDS" id="CAA05727"/>
    </conflict>
    <text>Sequencing errors.</text>
</comment>